<dbReference type="EC" id="2.4.1.180" evidence="1"/>
<dbReference type="EMBL" id="CP000826">
    <property type="protein sequence ID" value="ABV39282.1"/>
    <property type="molecule type" value="Genomic_DNA"/>
</dbReference>
<dbReference type="SMR" id="A8G842"/>
<dbReference type="STRING" id="399741.Spro_0172"/>
<dbReference type="CAZy" id="GT26">
    <property type="family name" value="Glycosyltransferase Family 26"/>
</dbReference>
<dbReference type="KEGG" id="spe:Spro_0172"/>
<dbReference type="eggNOG" id="COG1922">
    <property type="taxonomic scope" value="Bacteria"/>
</dbReference>
<dbReference type="HOGENOM" id="CLU_063203_3_2_6"/>
<dbReference type="OrthoDB" id="9808602at2"/>
<dbReference type="UniPathway" id="UPA00566"/>
<dbReference type="GO" id="GO:0047241">
    <property type="term" value="F:lipopolysaccharide N-acetylmannosaminouronosyltransferase activity"/>
    <property type="evidence" value="ECO:0007669"/>
    <property type="project" value="UniProtKB-UniRule"/>
</dbReference>
<dbReference type="GO" id="GO:0009246">
    <property type="term" value="P:enterobacterial common antigen biosynthetic process"/>
    <property type="evidence" value="ECO:0007669"/>
    <property type="project" value="UniProtKB-UniRule"/>
</dbReference>
<dbReference type="CDD" id="cd06533">
    <property type="entry name" value="Glyco_transf_WecG_TagA"/>
    <property type="match status" value="1"/>
</dbReference>
<dbReference type="HAMAP" id="MF_01001">
    <property type="entry name" value="WecG_RffM"/>
    <property type="match status" value="1"/>
</dbReference>
<dbReference type="InterPro" id="IPR023085">
    <property type="entry name" value="UDP-ManNAcA_Trfase_WecG"/>
</dbReference>
<dbReference type="InterPro" id="IPR004629">
    <property type="entry name" value="WecG_TagA_CpsF"/>
</dbReference>
<dbReference type="NCBIfam" id="NF002980">
    <property type="entry name" value="PRK03692.1"/>
    <property type="match status" value="1"/>
</dbReference>
<dbReference type="NCBIfam" id="TIGR00696">
    <property type="entry name" value="wecG_tagA_cpsF"/>
    <property type="match status" value="1"/>
</dbReference>
<dbReference type="PANTHER" id="PTHR34136">
    <property type="match status" value="1"/>
</dbReference>
<dbReference type="PANTHER" id="PTHR34136:SF1">
    <property type="entry name" value="UDP-N-ACETYL-D-MANNOSAMINURONIC ACID TRANSFERASE"/>
    <property type="match status" value="1"/>
</dbReference>
<dbReference type="Pfam" id="PF03808">
    <property type="entry name" value="Glyco_tran_WecG"/>
    <property type="match status" value="1"/>
</dbReference>
<keyword id="KW-0328">Glycosyltransferase</keyword>
<keyword id="KW-0808">Transferase</keyword>
<comment type="function">
    <text evidence="1">Catalyzes the synthesis of Und-PP-GlcNAc-ManNAcA (Lipid II), the second lipid-linked intermediate involved in enterobacterial common antigen (ECA) synthesis.</text>
</comment>
<comment type="catalytic activity">
    <reaction evidence="1">
        <text>UDP-N-acetyl-alpha-D-mannosaminouronate + N-acetyl-alpha-D-glucosaminyl-di-trans,octa-cis-undecaprenyl diphosphate = beta-D-ManNAcA-(1-&gt;4)-alpha-D-GlcNAc-di-trans,octa-cis-undecaprenyl diphosphate + UDP + H(+)</text>
        <dbReference type="Rhea" id="RHEA:28366"/>
        <dbReference type="ChEBI" id="CHEBI:15378"/>
        <dbReference type="ChEBI" id="CHEBI:58223"/>
        <dbReference type="ChEBI" id="CHEBI:61495"/>
        <dbReference type="ChEBI" id="CHEBI:62959"/>
        <dbReference type="ChEBI" id="CHEBI:70731"/>
        <dbReference type="EC" id="2.4.1.180"/>
    </reaction>
</comment>
<comment type="pathway">
    <text evidence="1">Bacterial outer membrane biogenesis; enterobacterial common antigen biosynthesis.</text>
</comment>
<comment type="similarity">
    <text evidence="1">Belongs to the glycosyltransferase 26 family.</text>
</comment>
<reference key="1">
    <citation type="submission" date="2007-09" db="EMBL/GenBank/DDBJ databases">
        <title>Complete sequence of chromosome of Serratia proteamaculans 568.</title>
        <authorList>
            <consortium name="US DOE Joint Genome Institute"/>
            <person name="Copeland A."/>
            <person name="Lucas S."/>
            <person name="Lapidus A."/>
            <person name="Barry K."/>
            <person name="Glavina del Rio T."/>
            <person name="Dalin E."/>
            <person name="Tice H."/>
            <person name="Pitluck S."/>
            <person name="Chain P."/>
            <person name="Malfatti S."/>
            <person name="Shin M."/>
            <person name="Vergez L."/>
            <person name="Schmutz J."/>
            <person name="Larimer F."/>
            <person name="Land M."/>
            <person name="Hauser L."/>
            <person name="Kyrpides N."/>
            <person name="Kim E."/>
            <person name="Taghavi S."/>
            <person name="Newman L."/>
            <person name="Vangronsveld J."/>
            <person name="van der Lelie D."/>
            <person name="Richardson P."/>
        </authorList>
    </citation>
    <scope>NUCLEOTIDE SEQUENCE [LARGE SCALE GENOMIC DNA]</scope>
    <source>
        <strain>568</strain>
    </source>
</reference>
<feature type="chain" id="PRO_0000318861" description="UDP-N-acetyl-D-mannosaminuronic acid transferase">
    <location>
        <begin position="1"/>
        <end position="246"/>
    </location>
</feature>
<sequence>MEAKISVPKYELRGFSLWGFRDMAQCMDFLFDGGRVKRGTLVAMNAEKILTAEQDTELHALLDEAEYKYADGISMVRSIRRKYPGADVSRVAGADLWEALMQRAGREGTPVFLIGGKPSVLAETEQKLRSQWNVNLVGSQDGYFKPEQREPLFERIRASGAAIVTVAMGSPKQEILMRDCRKVHPQALYMGVGGTYDVFTGHVKRAPKVWQNLGLEWLYRLLSQPSRLGRQLRLLKFVSYYYRGKM</sequence>
<name>WECG_SERP5</name>
<proteinExistence type="inferred from homology"/>
<evidence type="ECO:0000255" key="1">
    <source>
        <dbReference type="HAMAP-Rule" id="MF_01001"/>
    </source>
</evidence>
<accession>A8G842</accession>
<organism>
    <name type="scientific">Serratia proteamaculans (strain 568)</name>
    <dbReference type="NCBI Taxonomy" id="399741"/>
    <lineage>
        <taxon>Bacteria</taxon>
        <taxon>Pseudomonadati</taxon>
        <taxon>Pseudomonadota</taxon>
        <taxon>Gammaproteobacteria</taxon>
        <taxon>Enterobacterales</taxon>
        <taxon>Yersiniaceae</taxon>
        <taxon>Serratia</taxon>
    </lineage>
</organism>
<protein>
    <recommendedName>
        <fullName evidence="1">UDP-N-acetyl-D-mannosaminuronic acid transferase</fullName>
        <shortName evidence="1">UDP-ManNAcA transferase</shortName>
        <ecNumber evidence="1">2.4.1.180</ecNumber>
    </recommendedName>
</protein>
<gene>
    <name evidence="1" type="primary">wecG</name>
    <name evidence="1" type="synonym">rffM</name>
    <name type="ordered locus">Spro_0172</name>
</gene>